<gene>
    <name type="primary">HOX18</name>
    <name type="ORF">OsI_023462</name>
</gene>
<evidence type="ECO:0000250" key="1"/>
<evidence type="ECO:0000255" key="2">
    <source>
        <dbReference type="PROSITE-ProRule" id="PRU00108"/>
    </source>
</evidence>
<evidence type="ECO:0000256" key="3">
    <source>
        <dbReference type="SAM" id="MobiDB-lite"/>
    </source>
</evidence>
<evidence type="ECO:0000269" key="4">
    <source>
    </source>
</evidence>
<evidence type="ECO:0000305" key="5"/>
<keyword id="KW-0238">DNA-binding</keyword>
<keyword id="KW-0371">Homeobox</keyword>
<keyword id="KW-0539">Nucleus</keyword>
<keyword id="KW-1185">Reference proteome</keyword>
<keyword id="KW-0804">Transcription</keyword>
<keyword id="KW-0805">Transcription regulation</keyword>
<name>HOX18_ORYSI</name>
<comment type="function">
    <text evidence="1">Probable transcription factor.</text>
</comment>
<comment type="subcellular location">
    <subcellularLocation>
        <location evidence="5">Nucleus</location>
    </subcellularLocation>
</comment>
<comment type="tissue specificity">
    <text evidence="4">Expressed in roots, leaf sheaths and blades and panicles.</text>
</comment>
<comment type="similarity">
    <text evidence="5">Belongs to the HD-ZIP homeobox family. Class II subfamily.</text>
</comment>
<accession>A2YGL9</accession>
<accession>A5JPV4</accession>
<dbReference type="EMBL" id="CM000131">
    <property type="protein sequence ID" value="EAZ02230.1"/>
    <property type="molecule type" value="Genomic_DNA"/>
</dbReference>
<dbReference type="EMBL" id="EF555539">
    <property type="protein sequence ID" value="ABQ57280.1"/>
    <property type="molecule type" value="mRNA"/>
</dbReference>
<dbReference type="SMR" id="A2YGL9"/>
<dbReference type="EnsemblPlants" id="BGIOSGA020603-TA">
    <property type="protein sequence ID" value="BGIOSGA020603-PA"/>
    <property type="gene ID" value="BGIOSGA020603"/>
</dbReference>
<dbReference type="EnsemblPlants" id="OsIR64_06g0027170.01">
    <property type="protein sequence ID" value="OsIR64_06g0027170.01"/>
    <property type="gene ID" value="OsIR64_06g0027170"/>
</dbReference>
<dbReference type="EnsemblPlants" id="OsPr106_06g0027780.01">
    <property type="protein sequence ID" value="OsPr106_06g0027780.01"/>
    <property type="gene ID" value="OsPr106_06g0027780"/>
</dbReference>
<dbReference type="EnsemblPlants" id="OsZS97_06G027910_01">
    <property type="protein sequence ID" value="OsZS97_06G027910_01"/>
    <property type="gene ID" value="OsZS97_06G027910"/>
</dbReference>
<dbReference type="Gramene" id="BGIOSGA020603-TA">
    <property type="protein sequence ID" value="BGIOSGA020603-PA"/>
    <property type="gene ID" value="BGIOSGA020603"/>
</dbReference>
<dbReference type="Gramene" id="OsIR64_06g0027170.01">
    <property type="protein sequence ID" value="OsIR64_06g0027170.01"/>
    <property type="gene ID" value="OsIR64_06g0027170"/>
</dbReference>
<dbReference type="Gramene" id="OsPr106_06g0027780.01">
    <property type="protein sequence ID" value="OsPr106_06g0027780.01"/>
    <property type="gene ID" value="OsPr106_06g0027780"/>
</dbReference>
<dbReference type="Gramene" id="OsZS97_06G027910_01">
    <property type="protein sequence ID" value="OsZS97_06G027910_01"/>
    <property type="gene ID" value="OsZS97_06G027910"/>
</dbReference>
<dbReference type="HOGENOM" id="CLU_049516_3_0_1"/>
<dbReference type="OMA" id="EDSFRVH"/>
<dbReference type="Proteomes" id="UP000007015">
    <property type="component" value="Chromosome 6"/>
</dbReference>
<dbReference type="GO" id="GO:0005634">
    <property type="term" value="C:nucleus"/>
    <property type="evidence" value="ECO:0007669"/>
    <property type="project" value="UniProtKB-SubCell"/>
</dbReference>
<dbReference type="GO" id="GO:0000981">
    <property type="term" value="F:DNA-binding transcription factor activity, RNA polymerase II-specific"/>
    <property type="evidence" value="ECO:0007669"/>
    <property type="project" value="InterPro"/>
</dbReference>
<dbReference type="GO" id="GO:0043565">
    <property type="term" value="F:sequence-specific DNA binding"/>
    <property type="evidence" value="ECO:0007669"/>
    <property type="project" value="InterPro"/>
</dbReference>
<dbReference type="CDD" id="cd00086">
    <property type="entry name" value="homeodomain"/>
    <property type="match status" value="1"/>
</dbReference>
<dbReference type="Gene3D" id="1.10.10.60">
    <property type="entry name" value="Homeodomain-like"/>
    <property type="match status" value="1"/>
</dbReference>
<dbReference type="InterPro" id="IPR001356">
    <property type="entry name" value="HD"/>
</dbReference>
<dbReference type="InterPro" id="IPR050762">
    <property type="entry name" value="HD-ZIP_Homeobox_LZ_Class_II"/>
</dbReference>
<dbReference type="InterPro" id="IPR017970">
    <property type="entry name" value="Homeobox_CS"/>
</dbReference>
<dbReference type="InterPro" id="IPR009057">
    <property type="entry name" value="Homeodomain-like_sf"/>
</dbReference>
<dbReference type="InterPro" id="IPR003106">
    <property type="entry name" value="Leu_zip_homeo"/>
</dbReference>
<dbReference type="PANTHER" id="PTHR45714">
    <property type="entry name" value="HOMEOBOX-LEUCINE ZIPPER PROTEIN HAT14"/>
    <property type="match status" value="1"/>
</dbReference>
<dbReference type="PANTHER" id="PTHR45714:SF78">
    <property type="entry name" value="HOMEOBOX-LEUCINE ZIPPER PROTEIN HOX18"/>
    <property type="match status" value="1"/>
</dbReference>
<dbReference type="Pfam" id="PF02183">
    <property type="entry name" value="HALZ"/>
    <property type="match status" value="1"/>
</dbReference>
<dbReference type="Pfam" id="PF00046">
    <property type="entry name" value="Homeodomain"/>
    <property type="match status" value="1"/>
</dbReference>
<dbReference type="SMART" id="SM00340">
    <property type="entry name" value="HALZ"/>
    <property type="match status" value="1"/>
</dbReference>
<dbReference type="SMART" id="SM00389">
    <property type="entry name" value="HOX"/>
    <property type="match status" value="1"/>
</dbReference>
<dbReference type="SUPFAM" id="SSF46689">
    <property type="entry name" value="Homeodomain-like"/>
    <property type="match status" value="1"/>
</dbReference>
<dbReference type="PROSITE" id="PS00027">
    <property type="entry name" value="HOMEOBOX_1"/>
    <property type="match status" value="1"/>
</dbReference>
<dbReference type="PROSITE" id="PS50071">
    <property type="entry name" value="HOMEOBOX_2"/>
    <property type="match status" value="1"/>
</dbReference>
<protein>
    <recommendedName>
        <fullName>Homeobox-leucine zipper protein HOX18</fullName>
    </recommendedName>
    <alternativeName>
        <fullName>HD-ZIP protein HOX18</fullName>
    </alternativeName>
    <alternativeName>
        <fullName>Homeodomain transcription factor HOX18</fullName>
    </alternativeName>
    <alternativeName>
        <fullName>OsHox18</fullName>
    </alternativeName>
</protein>
<reference key="1">
    <citation type="journal article" date="2005" name="PLoS Biol.">
        <title>The genomes of Oryza sativa: a history of duplications.</title>
        <authorList>
            <person name="Yu J."/>
            <person name="Wang J."/>
            <person name="Lin W."/>
            <person name="Li S."/>
            <person name="Li H."/>
            <person name="Zhou J."/>
            <person name="Ni P."/>
            <person name="Dong W."/>
            <person name="Hu S."/>
            <person name="Zeng C."/>
            <person name="Zhang J."/>
            <person name="Zhang Y."/>
            <person name="Li R."/>
            <person name="Xu Z."/>
            <person name="Li S."/>
            <person name="Li X."/>
            <person name="Zheng H."/>
            <person name="Cong L."/>
            <person name="Lin L."/>
            <person name="Yin J."/>
            <person name="Geng J."/>
            <person name="Li G."/>
            <person name="Shi J."/>
            <person name="Liu J."/>
            <person name="Lv H."/>
            <person name="Li J."/>
            <person name="Wang J."/>
            <person name="Deng Y."/>
            <person name="Ran L."/>
            <person name="Shi X."/>
            <person name="Wang X."/>
            <person name="Wu Q."/>
            <person name="Li C."/>
            <person name="Ren X."/>
            <person name="Wang J."/>
            <person name="Wang X."/>
            <person name="Li D."/>
            <person name="Liu D."/>
            <person name="Zhang X."/>
            <person name="Ji Z."/>
            <person name="Zhao W."/>
            <person name="Sun Y."/>
            <person name="Zhang Z."/>
            <person name="Bao J."/>
            <person name="Han Y."/>
            <person name="Dong L."/>
            <person name="Ji J."/>
            <person name="Chen P."/>
            <person name="Wu S."/>
            <person name="Liu J."/>
            <person name="Xiao Y."/>
            <person name="Bu D."/>
            <person name="Tan J."/>
            <person name="Yang L."/>
            <person name="Ye C."/>
            <person name="Zhang J."/>
            <person name="Xu J."/>
            <person name="Zhou Y."/>
            <person name="Yu Y."/>
            <person name="Zhang B."/>
            <person name="Zhuang S."/>
            <person name="Wei H."/>
            <person name="Liu B."/>
            <person name="Lei M."/>
            <person name="Yu H."/>
            <person name="Li Y."/>
            <person name="Xu H."/>
            <person name="Wei S."/>
            <person name="He X."/>
            <person name="Fang L."/>
            <person name="Zhang Z."/>
            <person name="Zhang Y."/>
            <person name="Huang X."/>
            <person name="Su Z."/>
            <person name="Tong W."/>
            <person name="Li J."/>
            <person name="Tong Z."/>
            <person name="Li S."/>
            <person name="Ye J."/>
            <person name="Wang L."/>
            <person name="Fang L."/>
            <person name="Lei T."/>
            <person name="Chen C.-S."/>
            <person name="Chen H.-C."/>
            <person name="Xu Z."/>
            <person name="Li H."/>
            <person name="Huang H."/>
            <person name="Zhang F."/>
            <person name="Xu H."/>
            <person name="Li N."/>
            <person name="Zhao C."/>
            <person name="Li S."/>
            <person name="Dong L."/>
            <person name="Huang Y."/>
            <person name="Li L."/>
            <person name="Xi Y."/>
            <person name="Qi Q."/>
            <person name="Li W."/>
            <person name="Zhang B."/>
            <person name="Hu W."/>
            <person name="Zhang Y."/>
            <person name="Tian X."/>
            <person name="Jiao Y."/>
            <person name="Liang X."/>
            <person name="Jin J."/>
            <person name="Gao L."/>
            <person name="Zheng W."/>
            <person name="Hao B."/>
            <person name="Liu S.-M."/>
            <person name="Wang W."/>
            <person name="Yuan L."/>
            <person name="Cao M."/>
            <person name="McDermott J."/>
            <person name="Samudrala R."/>
            <person name="Wang J."/>
            <person name="Wong G.K.-S."/>
            <person name="Yang H."/>
        </authorList>
    </citation>
    <scope>NUCLEOTIDE SEQUENCE [LARGE SCALE GENOMIC DNA]</scope>
    <source>
        <strain>cv. 93-11</strain>
    </source>
</reference>
<reference key="2">
    <citation type="journal article" date="2008" name="Plant Mol. Biol.">
        <title>A genome-wide survey of HD-Zip genes in rice and analysis of drought-responsive family members.</title>
        <authorList>
            <person name="Agalou A."/>
            <person name="Purwantomo S."/>
            <person name="Oevernaes E."/>
            <person name="Johannesson H."/>
            <person name="Zhu X."/>
            <person name="Estiati A."/>
            <person name="de Kam R.J."/>
            <person name="Engstroem P."/>
            <person name="Slamet-Loedin I.H."/>
            <person name="Zhu Z."/>
            <person name="Wang M."/>
            <person name="Xiong L."/>
            <person name="Meijer A.H."/>
            <person name="Ouwerkerk P.B.F."/>
        </authorList>
    </citation>
    <scope>NUCLEOTIDE SEQUENCE [MRNA] OF 17-160</scope>
    <scope>TISSUE SPECIFICITY</scope>
    <scope>GENE FAMILY</scope>
    <scope>NOMENCLATURE</scope>
    <source>
        <strain>cv. Minghui 86</strain>
    </source>
</reference>
<sequence>MEGEDLGSWLGLGIGGGGYAYGGDDCRRSPSSPSPVQMLFSQHVKEEITRGYDHGRDEEQASGSKIMKGERGARLRVMRSIRNSGGDGSRSRVLSLGDDGGDGGSGSGGGGGTRKKLQLTKEQSTLLEDSFRVHNILSHAQKHELARQLKLKPRQVEVWFQNRRARTKLKQTEVDCEFLKRCCESLTEENKQLKHELMELRRLASAAAAAAGSQLYVQFPRAAAAAMVNVCPSCEKVTVMGGGGGETGKSSSSYSS</sequence>
<proteinExistence type="evidence at transcript level"/>
<organism>
    <name type="scientific">Oryza sativa subsp. indica</name>
    <name type="common">Rice</name>
    <dbReference type="NCBI Taxonomy" id="39946"/>
    <lineage>
        <taxon>Eukaryota</taxon>
        <taxon>Viridiplantae</taxon>
        <taxon>Streptophyta</taxon>
        <taxon>Embryophyta</taxon>
        <taxon>Tracheophyta</taxon>
        <taxon>Spermatophyta</taxon>
        <taxon>Magnoliopsida</taxon>
        <taxon>Liliopsida</taxon>
        <taxon>Poales</taxon>
        <taxon>Poaceae</taxon>
        <taxon>BOP clade</taxon>
        <taxon>Oryzoideae</taxon>
        <taxon>Oryzeae</taxon>
        <taxon>Oryzinae</taxon>
        <taxon>Oryza</taxon>
        <taxon>Oryza sativa</taxon>
    </lineage>
</organism>
<feature type="chain" id="PRO_0000331708" description="Homeobox-leucine zipper protein HOX18">
    <location>
        <begin position="1"/>
        <end position="256"/>
    </location>
</feature>
<feature type="DNA-binding region" description="Homeobox" evidence="2">
    <location>
        <begin position="112"/>
        <end position="171"/>
    </location>
</feature>
<feature type="region of interest" description="Disordered" evidence="3">
    <location>
        <begin position="52"/>
        <end position="117"/>
    </location>
</feature>
<feature type="region of interest" description="Leucine-zipper">
    <location>
        <begin position="170"/>
        <end position="214"/>
    </location>
</feature>
<feature type="compositionally biased region" description="Gly residues" evidence="3">
    <location>
        <begin position="102"/>
        <end position="112"/>
    </location>
</feature>
<feature type="sequence conflict" description="In Ref. 2; ABQ57280." evidence="5" ref="2">
    <original>M</original>
    <variation>L</variation>
    <location>
        <position position="78"/>
    </location>
</feature>
<feature type="sequence conflict" description="In Ref. 2; ABQ57280." evidence="5" ref="2">
    <original>R</original>
    <variation>P</variation>
    <location>
        <position position="92"/>
    </location>
</feature>
<feature type="sequence conflict" description="In Ref. 2; ABQ57280." evidence="5" ref="2">
    <original>S</original>
    <variation>G</variation>
    <location>
        <position position="107"/>
    </location>
</feature>